<sequence length="1179" mass="130925">MANGGGGGGGSSGGGGGGGGGGSGLRMSSNIHASHLSLDASSSSSSSSSSSSSSSSSSSSSVHEPKMDALIIPVTMEVPCDSRGQRMWWAFLASSMVTFFGGLFIILLWRTLKYLWTVCCHCGGKAKEAQKINNGSSQADGTLKPVDEKEEAVAAEVGWMTSVKDWAGVMISAQTLTGRVLVVLVFALSIGALVIYFIDSSNPIESCQNFYKDFTLQIDMAFNVFFLLYFGLRFIAANDKLWFWLEVNSVVDFFTVPPVFVSVYLNRSWLGLRFLRALRLIQFSEILQFLNILKTSNSIKLVNLLSIFISTWLTAAGFIHLVENSGDPWENFQNNQALTYWECVYLLMVTMSTVGYGDVYAKTTLGRLFMVFFILGGLAMFASYVPEIIELIGNRKKYGGSYSAVSGRKHIVVCGHITLESVSNFLKDFLHKDRDDVNVEIVFLHNISPNLELEALFKRHFTQVEFYQGSVLNPHDLARVKIESADACLILANKYCADPDAEDASNIMRVISIKNYHPKIRIITQMLQYHNKAHLLNIPSWNWKEGDDAICLAELKLGFIAQSCLAQGLSTMLANLFSMRSFIKIEEDTWQKYYLEGVSNEMYTEYLSSAFVGLSFPTVCELCFVKLKLLMIAIEYKSANRESRILINPGNHLKIQEGTLGFFIASDAKEVKRAFFYCKACHDDITDPKRIKKCGCKRLEDEQPSTLSPKKKQRNGGMRNSPNSSPKLMRHDPLLIPGNDQIDNMDSNVKKYDSTGMFHWCAPKEIEKVILTRSEAAMTVLSGHVVVCIFGDVSSALIGLRNLVMPLRASNFHYHELKHIVFVGSIEYLKREWETLHNFPKVSILPGTPLSRADLRAVNINLCDMCVILSANQNNIDDTSLQDKECILASLNIKSMQFDDSIGVLQANSQGFTPPGMDRSSPDNSPVHGMLRQPSITTGVNIPIITELVNDTNVQFLDQDDDDDPDTELYLTQPFACGTAFAVSVLDSLMSATYFNDNILTLIRTLVTGGATPELEALIAEENALRGGYSTPQTLANRDRCRVAQLALLDGPFADLGDGGCYGDLFCKALKTYNMLCFGIYRLRDAHLSTPSQCTKRYVITNPPYEFELVPTDLIFCLMQFDHNAGQSRASLSHSSHSSQSSSKKSSSVHSIPSTANRQNRPKSRESRDKQKYVQEERL</sequence>
<feature type="chain" id="PRO_0000054136" description="Calcium-activated potassium channel subunit alpha-1">
    <location>
        <begin position="1"/>
        <end position="1179"/>
    </location>
</feature>
<feature type="topological domain" description="Extracellular" evidence="6">
    <location>
        <begin position="1"/>
        <end position="87"/>
    </location>
</feature>
<feature type="transmembrane region" description="Helical; Name=Segment S0" evidence="6">
    <location>
        <begin position="88"/>
        <end position="108"/>
    </location>
</feature>
<feature type="topological domain" description="Cytoplasmic" evidence="6">
    <location>
        <begin position="109"/>
        <end position="179"/>
    </location>
</feature>
<feature type="transmembrane region" description="Helical; Name=Segment S1" evidence="6">
    <location>
        <begin position="180"/>
        <end position="200"/>
    </location>
</feature>
<feature type="topological domain" description="Extracellular" evidence="6">
    <location>
        <begin position="201"/>
        <end position="215"/>
    </location>
</feature>
<feature type="transmembrane region" description="Helical; Name=Segment S2" evidence="6">
    <location>
        <begin position="216"/>
        <end position="236"/>
    </location>
</feature>
<feature type="topological domain" description="Cytoplasmic" evidence="6">
    <location>
        <begin position="237"/>
        <end position="240"/>
    </location>
</feature>
<feature type="transmembrane region" description="Helical; Name=Segment S3" evidence="6">
    <location>
        <begin position="241"/>
        <end position="261"/>
    </location>
</feature>
<feature type="topological domain" description="Extracellular" evidence="6">
    <location>
        <begin position="262"/>
        <end position="265"/>
    </location>
</feature>
<feature type="transmembrane region" description="Helical; Voltage-sensor; Name=Segment S4" evidence="6">
    <location>
        <begin position="266"/>
        <end position="286"/>
    </location>
</feature>
<feature type="topological domain" description="Cytoplasmic" evidence="6">
    <location>
        <begin position="287"/>
        <end position="301"/>
    </location>
</feature>
<feature type="transmembrane region" description="Helical; Name=Segment S5" evidence="6">
    <location>
        <begin position="302"/>
        <end position="322"/>
    </location>
</feature>
<feature type="topological domain" description="Extracellular" evidence="6">
    <location>
        <begin position="323"/>
        <end position="336"/>
    </location>
</feature>
<feature type="intramembrane region" description="Pore-forming; Name=P region" evidence="6">
    <location>
        <begin position="337"/>
        <end position="359"/>
    </location>
</feature>
<feature type="topological domain" description="Extracellular" evidence="6">
    <location>
        <begin position="360"/>
        <end position="368"/>
    </location>
</feature>
<feature type="transmembrane region" description="Helical; Name=Segment S6" evidence="6">
    <location>
        <begin position="369"/>
        <end position="389"/>
    </location>
</feature>
<feature type="topological domain" description="Cytoplasmic" evidence="6">
    <location>
        <begin position="390"/>
        <end position="1179"/>
    </location>
</feature>
<feature type="domain" description="RCK N-terminal 1" evidence="7">
    <location>
        <begin position="408"/>
        <end position="550"/>
    </location>
</feature>
<feature type="domain" description="RCK N-terminal 2" evidence="7">
    <location>
        <begin position="782"/>
        <end position="926"/>
    </location>
</feature>
<feature type="region of interest" description="Disordered" evidence="8">
    <location>
        <begin position="1"/>
        <end position="62"/>
    </location>
</feature>
<feature type="region of interest" description="Segment S7">
    <location>
        <begin position="557"/>
        <end position="577"/>
    </location>
</feature>
<feature type="region of interest" description="Segment S8">
    <location>
        <begin position="614"/>
        <end position="634"/>
    </location>
</feature>
<feature type="region of interest" description="Heme-binding motif" evidence="4">
    <location>
        <begin position="678"/>
        <end position="682"/>
    </location>
</feature>
<feature type="region of interest" description="Disordered" evidence="8">
    <location>
        <begin position="702"/>
        <end position="730"/>
    </location>
</feature>
<feature type="region of interest" description="Segment S9">
    <location>
        <begin position="780"/>
        <end position="800"/>
    </location>
</feature>
<feature type="region of interest" description="Segment S10">
    <location>
        <begin position="975"/>
        <end position="995"/>
    </location>
</feature>
<feature type="region of interest" description="Disordered" evidence="8">
    <location>
        <begin position="1129"/>
        <end position="1179"/>
    </location>
</feature>
<feature type="short sequence motif" description="Selectivity for potassium">
    <location>
        <begin position="353"/>
        <end position="356"/>
    </location>
</feature>
<feature type="short sequence motif" description="Calcium bowl" evidence="2">
    <location>
        <begin position="946"/>
        <end position="968"/>
    </location>
</feature>
<feature type="compositionally biased region" description="Gly residues" evidence="8">
    <location>
        <begin position="1"/>
        <end position="24"/>
    </location>
</feature>
<feature type="compositionally biased region" description="Low complexity" evidence="8">
    <location>
        <begin position="41"/>
        <end position="61"/>
    </location>
</feature>
<feature type="compositionally biased region" description="Low complexity" evidence="8">
    <location>
        <begin position="1129"/>
        <end position="1154"/>
    </location>
</feature>
<feature type="compositionally biased region" description="Basic and acidic residues" evidence="8">
    <location>
        <begin position="1163"/>
        <end position="1179"/>
    </location>
</feature>
<feature type="binding site" evidence="13">
    <location>
        <position position="440"/>
    </location>
    <ligand>
        <name>Mg(2+)</name>
        <dbReference type="ChEBI" id="CHEBI:18420"/>
    </ligand>
</feature>
<feature type="binding site" evidence="13">
    <location>
        <position position="463"/>
    </location>
    <ligand>
        <name>Mg(2+)</name>
        <dbReference type="ChEBI" id="CHEBI:18420"/>
    </ligand>
</feature>
<feature type="binding site" evidence="13">
    <location>
        <position position="465"/>
    </location>
    <ligand>
        <name>Mg(2+)</name>
        <dbReference type="ChEBI" id="CHEBI:18420"/>
    </ligand>
</feature>
<feature type="binding site" evidence="2">
    <location>
        <position position="955"/>
    </location>
    <ligand>
        <name>Ca(2+)</name>
        <dbReference type="ChEBI" id="CHEBI:29108"/>
    </ligand>
</feature>
<feature type="binding site" evidence="2">
    <location>
        <position position="958"/>
    </location>
    <ligand>
        <name>Ca(2+)</name>
        <dbReference type="ChEBI" id="CHEBI:29108"/>
    </ligand>
</feature>
<feature type="binding site" evidence="2">
    <location>
        <position position="961"/>
    </location>
    <ligand>
        <name>Ca(2+)</name>
        <dbReference type="ChEBI" id="CHEBI:29108"/>
    </ligand>
</feature>
<feature type="binding site" evidence="2">
    <location>
        <position position="963"/>
    </location>
    <ligand>
        <name>Ca(2+)</name>
        <dbReference type="ChEBI" id="CHEBI:29108"/>
    </ligand>
</feature>
<feature type="modified residue" description="Phosphothreonine" evidence="3">
    <location>
        <position position="706"/>
    </location>
</feature>
<feature type="modified residue" description="Phosphoserine" evidence="3">
    <location>
        <position position="708"/>
    </location>
</feature>
<feature type="modified residue" description="Phosphoserine" evidence="3">
    <location>
        <position position="721"/>
    </location>
</feature>
<feature type="modified residue" description="Phosphoserine" evidence="3">
    <location>
        <position position="725"/>
    </location>
</feature>
<feature type="modified residue" description="Phosphothreonine" evidence="3">
    <location>
        <position position="913"/>
    </location>
</feature>
<feature type="modified residue" description="Phosphoserine" evidence="3">
    <location>
        <position position="921"/>
    </location>
</feature>
<feature type="modified residue" description="Phosphoserine" evidence="3">
    <location>
        <position position="925"/>
    </location>
</feature>
<feature type="modified residue" description="Phosphoserine" evidence="5">
    <location>
        <position position="1164"/>
    </location>
</feature>
<feature type="modified residue" description="Phosphoserine" evidence="5">
    <location>
        <position position="1167"/>
    </location>
</feature>
<feature type="lipid moiety-binding region" description="S-palmitoyl cysteine" evidence="4">
    <location>
        <position position="119"/>
    </location>
</feature>
<feature type="lipid moiety-binding region" description="S-palmitoyl cysteine" evidence="4">
    <location>
        <position position="120"/>
    </location>
</feature>
<feature type="lipid moiety-binding region" description="S-palmitoyl cysteine" evidence="4">
    <location>
        <position position="122"/>
    </location>
</feature>
<feature type="splice variant" id="VSP_009966" description="In isoform 3." evidence="11">
    <original>L</original>
    <variation>PKMSIYKRMRRACCFGCGRSERDCSCMSGRVRGHVDTLGRAFPLSSVSVSDCCTRFRAF</variation>
    <location>
        <position position="699"/>
    </location>
</feature>
<feature type="splice variant" id="VSP_009968" description="In isoform 4." evidence="11">
    <original>TPLSRADLRAVNINL</original>
    <variation>QGMHLGVTQHQIYAV</variation>
    <location>
        <begin position="848"/>
        <end position="862"/>
    </location>
</feature>
<feature type="splice variant" id="VSP_009969" description="In isoform 4." evidence="11">
    <location>
        <begin position="863"/>
        <end position="1179"/>
    </location>
</feature>
<feature type="splice variant" id="VSP_009967" description="In isoform 2." evidence="12">
    <original>KYVQEERL</original>
    <variation>NEKKWFTDEPDNAYPRNIQIKPMSTHMANQINQYKSTSSLIPPIREVEDEC</variation>
    <location>
        <begin position="1172"/>
        <end position="1179"/>
    </location>
</feature>
<feature type="sequence conflict" description="In Ref. 3; BAA23747." evidence="13" ref="3">
    <location>
        <position position="42"/>
    </location>
</feature>
<feature type="sequence conflict" description="In Ref. 3; BAA23747." evidence="13" ref="3">
    <original>F</original>
    <variation>S</variation>
    <location>
        <position position="234"/>
    </location>
</feature>
<feature type="sequence conflict" description="In Ref. 3; BAA23747." evidence="13" ref="3">
    <original>V</original>
    <variation>F</variation>
    <location>
        <position position="422"/>
    </location>
</feature>
<feature type="sequence conflict" description="In Ref. 3; BAA23747." evidence="13" ref="3">
    <original>K</original>
    <variation>M</variation>
    <location>
        <position position="532"/>
    </location>
</feature>
<feature type="sequence conflict" description="In Ref. 2; AAF17562." evidence="13" ref="2">
    <original>S</original>
    <variation>T</variation>
    <location>
        <position position="774"/>
    </location>
</feature>
<feature type="sequence conflict" description="In Ref. 3; BAA23747." evidence="13" ref="3">
    <original>N</original>
    <variation>D</variation>
    <location>
        <position position="874"/>
    </location>
</feature>
<feature type="sequence conflict" description="In Ref. 2; AAF17562." evidence="13" ref="2">
    <original>M</original>
    <variation>I</variation>
    <location>
        <position position="1075"/>
    </location>
</feature>
<feature type="sequence conflict" description="In Ref. 3; BAA23747." evidence="13" ref="3">
    <original>P</original>
    <variation>A</variation>
    <location>
        <position position="1111"/>
    </location>
</feature>
<feature type="helix" evidence="14">
    <location>
        <begin position="88"/>
        <end position="119"/>
    </location>
</feature>
<feature type="helix" evidence="14">
    <location>
        <begin position="159"/>
        <end position="171"/>
    </location>
</feature>
<feature type="helix" evidence="14">
    <location>
        <begin position="176"/>
        <end position="199"/>
    </location>
</feature>
<feature type="strand" evidence="14">
    <location>
        <begin position="204"/>
        <end position="207"/>
    </location>
</feature>
<feature type="strand" evidence="14">
    <location>
        <begin position="210"/>
        <end position="212"/>
    </location>
</feature>
<feature type="helix" evidence="14">
    <location>
        <begin position="214"/>
        <end position="236"/>
    </location>
</feature>
<feature type="helix" evidence="14">
    <location>
        <begin position="240"/>
        <end position="244"/>
    </location>
</feature>
<feature type="helix" evidence="14">
    <location>
        <begin position="247"/>
        <end position="265"/>
    </location>
</feature>
<feature type="strand" evidence="14">
    <location>
        <begin position="267"/>
        <end position="269"/>
    </location>
</feature>
<feature type="helix" evidence="14">
    <location>
        <begin position="273"/>
        <end position="282"/>
    </location>
</feature>
<feature type="helix" evidence="14">
    <location>
        <begin position="283"/>
        <end position="289"/>
    </location>
</feature>
<feature type="helix" evidence="14">
    <location>
        <begin position="296"/>
        <end position="325"/>
    </location>
</feature>
<feature type="helix" evidence="14">
    <location>
        <begin position="328"/>
        <end position="330"/>
    </location>
</feature>
<feature type="helix" evidence="14">
    <location>
        <begin position="340"/>
        <end position="351"/>
    </location>
</feature>
<feature type="strand" evidence="14">
    <location>
        <begin position="357"/>
        <end position="359"/>
    </location>
</feature>
<feature type="helix" evidence="14">
    <location>
        <begin position="364"/>
        <end position="393"/>
    </location>
</feature>
<feature type="strand" evidence="14">
    <location>
        <begin position="409"/>
        <end position="416"/>
    </location>
</feature>
<feature type="helix" evidence="14">
    <location>
        <begin position="419"/>
        <end position="429"/>
    </location>
</feature>
<feature type="strand" evidence="14">
    <location>
        <begin position="439"/>
        <end position="447"/>
    </location>
</feature>
<feature type="helix" evidence="14">
    <location>
        <begin position="451"/>
        <end position="459"/>
    </location>
</feature>
<feature type="turn" evidence="14">
    <location>
        <begin position="460"/>
        <end position="463"/>
    </location>
</feature>
<feature type="strand" evidence="14">
    <location>
        <begin position="464"/>
        <end position="468"/>
    </location>
</feature>
<feature type="helix" evidence="14">
    <location>
        <begin position="474"/>
        <end position="479"/>
    </location>
</feature>
<feature type="helix" evidence="14">
    <location>
        <begin position="482"/>
        <end position="484"/>
    </location>
</feature>
<feature type="strand" evidence="14">
    <location>
        <begin position="488"/>
        <end position="491"/>
    </location>
</feature>
<feature type="helix" evidence="14">
    <location>
        <begin position="499"/>
        <end position="516"/>
    </location>
</feature>
<feature type="strand" evidence="14">
    <location>
        <begin position="522"/>
        <end position="527"/>
    </location>
</feature>
<feature type="helix" evidence="14">
    <location>
        <begin position="529"/>
        <end position="535"/>
    </location>
</feature>
<feature type="turn" evidence="14">
    <location>
        <begin position="543"/>
        <end position="546"/>
    </location>
</feature>
<feature type="strand" evidence="14">
    <location>
        <begin position="548"/>
        <end position="551"/>
    </location>
</feature>
<feature type="helix" evidence="14">
    <location>
        <begin position="552"/>
        <end position="565"/>
    </location>
</feature>
<feature type="helix" evidence="14">
    <location>
        <begin position="569"/>
        <end position="577"/>
    </location>
</feature>
<feature type="helix" evidence="14">
    <location>
        <begin position="590"/>
        <end position="598"/>
    </location>
</feature>
<feature type="strand" evidence="14">
    <location>
        <begin position="601"/>
        <end position="606"/>
    </location>
</feature>
<feature type="strand" evidence="14">
    <location>
        <begin position="609"/>
        <end position="611"/>
    </location>
</feature>
<feature type="helix" evidence="14">
    <location>
        <begin position="616"/>
        <end position="625"/>
    </location>
</feature>
<feature type="strand" evidence="14">
    <location>
        <begin position="630"/>
        <end position="634"/>
    </location>
</feature>
<feature type="strand" evidence="14">
    <location>
        <begin position="646"/>
        <end position="648"/>
    </location>
</feature>
<feature type="strand" evidence="14">
    <location>
        <begin position="660"/>
        <end position="666"/>
    </location>
</feature>
<feature type="helix" evidence="14">
    <location>
        <begin position="668"/>
        <end position="675"/>
    </location>
</feature>
<feature type="turn" evidence="14">
    <location>
        <begin position="679"/>
        <end position="682"/>
    </location>
</feature>
<feature type="strand" evidence="14">
    <location>
        <begin position="754"/>
        <end position="756"/>
    </location>
</feature>
<feature type="helix" evidence="14">
    <location>
        <begin position="766"/>
        <end position="769"/>
    </location>
</feature>
<feature type="helix" evidence="14">
    <location>
        <begin position="773"/>
        <end position="778"/>
    </location>
</feature>
<feature type="strand" evidence="14">
    <location>
        <begin position="783"/>
        <end position="790"/>
    </location>
</feature>
<feature type="helix" evidence="14">
    <location>
        <begin position="801"/>
        <end position="804"/>
    </location>
</feature>
<feature type="helix" evidence="14">
    <location>
        <begin position="806"/>
        <end position="808"/>
    </location>
</feature>
<feature type="helix" evidence="14">
    <location>
        <begin position="814"/>
        <end position="816"/>
    </location>
</feature>
<feature type="strand" evidence="14">
    <location>
        <begin position="819"/>
        <end position="824"/>
    </location>
</feature>
<feature type="helix" evidence="14">
    <location>
        <begin position="826"/>
        <end position="832"/>
    </location>
</feature>
<feature type="helix" evidence="14">
    <location>
        <begin position="833"/>
        <end position="835"/>
    </location>
</feature>
<feature type="turn" evidence="14">
    <location>
        <begin position="836"/>
        <end position="838"/>
    </location>
</feature>
<feature type="strand" evidence="14">
    <location>
        <begin position="840"/>
        <end position="847"/>
    </location>
</feature>
<feature type="helix" evidence="14">
    <location>
        <begin position="852"/>
        <end position="858"/>
    </location>
</feature>
<feature type="helix" evidence="14">
    <location>
        <begin position="860"/>
        <end position="862"/>
    </location>
</feature>
<feature type="strand" evidence="14">
    <location>
        <begin position="864"/>
        <end position="870"/>
    </location>
</feature>
<feature type="helix" evidence="14">
    <location>
        <begin position="871"/>
        <end position="873"/>
    </location>
</feature>
<feature type="helix" evidence="14">
    <location>
        <begin position="879"/>
        <end position="881"/>
    </location>
</feature>
<feature type="helix" evidence="14">
    <location>
        <begin position="884"/>
        <end position="894"/>
    </location>
</feature>
<feature type="helix" evidence="14">
    <location>
        <begin position="939"/>
        <end position="941"/>
    </location>
</feature>
<feature type="strand" evidence="14">
    <location>
        <begin position="944"/>
        <end position="947"/>
    </location>
</feature>
<feature type="helix" evidence="14">
    <location>
        <begin position="951"/>
        <end position="956"/>
    </location>
</feature>
<feature type="strand" evidence="14">
    <location>
        <begin position="959"/>
        <end position="961"/>
    </location>
</feature>
<feature type="turn" evidence="14">
    <location>
        <begin position="969"/>
        <end position="971"/>
    </location>
</feature>
<feature type="helix" evidence="14">
    <location>
        <begin position="973"/>
        <end position="976"/>
    </location>
</feature>
<feature type="strand" evidence="14">
    <location>
        <begin position="979"/>
        <end position="981"/>
    </location>
</feature>
<feature type="helix" evidence="14">
    <location>
        <begin position="983"/>
        <end position="988"/>
    </location>
</feature>
<feature type="helix" evidence="14">
    <location>
        <begin position="989"/>
        <end position="995"/>
    </location>
</feature>
<feature type="helix" evidence="14">
    <location>
        <begin position="999"/>
        <end position="1007"/>
    </location>
</feature>
<feature type="helix" evidence="14">
    <location>
        <begin position="1013"/>
        <end position="1022"/>
    </location>
</feature>
<feature type="helix" evidence="14">
    <location>
        <begin position="1032"/>
        <end position="1035"/>
    </location>
</feature>
<feature type="strand" evidence="14">
    <location>
        <begin position="1042"/>
        <end position="1050"/>
    </location>
</feature>
<feature type="helix" evidence="14">
    <location>
        <begin position="1051"/>
        <end position="1053"/>
    </location>
</feature>
<feature type="helix" evidence="14">
    <location>
        <begin position="1054"/>
        <end position="1057"/>
    </location>
</feature>
<feature type="helix" evidence="14">
    <location>
        <begin position="1062"/>
        <end position="1073"/>
    </location>
</feature>
<feature type="strand" evidence="14">
    <location>
        <begin position="1079"/>
        <end position="1083"/>
    </location>
</feature>
<feature type="turn" evidence="14">
    <location>
        <begin position="1084"/>
        <end position="1086"/>
    </location>
</feature>
<feature type="strand" evidence="14">
    <location>
        <begin position="1087"/>
        <end position="1090"/>
    </location>
</feature>
<feature type="strand" evidence="14">
    <location>
        <begin position="1097"/>
        <end position="1102"/>
    </location>
</feature>
<feature type="strand" evidence="14">
    <location>
        <begin position="1114"/>
        <end position="1119"/>
    </location>
</feature>
<comment type="function">
    <text evidence="4">Potassium channel activated by both membrane depolarization or increase in cytosolic Ca(2+) that mediates export of K(+). It is also activated by the concentration of cytosolic Mg(2+). Its activation dampens the excitatory events that elevate the cytosolic Ca(2+) concentration and/or depolarize the cell membrane. It therefore contributes to repolarization of the membrane potential. Plays a key role in controlling excitability in a number of systems, such as regulation of the contraction of smooth muscle, the tuning of hair cells in the cochlea, regulation of transmitter release, and innate immunity. In smooth muscles, its activation by high level of Ca(2+), caused by ryanodine receptors in the sarcoplasmic reticulum, regulates the membrane potential. In cochlea cells, its number and kinetic properties partly determine the characteristic frequency of each hair cell and thereby helps to establish a tonotopic map. Kinetics of KCNMA1 channels are determined by alternative splicing, phosphorylation status and its combination with modulating beta subunits. Highly sensitive to both iberiotoxin (IbTx) and charybdotoxin (CTX) (By similarity).</text>
</comment>
<comment type="function">
    <molecule>Isoform 3</molecule>
    <text evidence="10">Potassium channel activated by both membrane depolarization or increase in cytosolic Ca(2+) that mediates export of K(+).</text>
</comment>
<comment type="catalytic activity">
    <molecule>Isoform 3</molecule>
    <reaction evidence="10">
        <text>K(+)(in) = K(+)(out)</text>
        <dbReference type="Rhea" id="RHEA:29463"/>
        <dbReference type="ChEBI" id="CHEBI:29103"/>
    </reaction>
</comment>
<comment type="activity regulation">
    <text evidence="4">Ethanol and carbon monoxide-bound heme increase channel activation. Heme inhibits channel activation (By similarity).</text>
</comment>
<comment type="subunit">
    <text evidence="3 4">Homotetramer; which constitutes the calcium-activated potassium channel. Interacts with beta subunits KCNMB1, KCNMB2, KCNMB3 and KCNMB4. Interacts with gamma subunits LRRC26, LRRC38, LRRC52 and LRRC55. Beta and gamma subunits are accessory, and modulate its activity. Interacts with RAB11B (By similarity).</text>
</comment>
<comment type="subcellular location">
    <subcellularLocation>
        <location evidence="9">Cell membrane</location>
        <topology evidence="6">Multi-pass membrane protein</topology>
    </subcellularLocation>
</comment>
<comment type="subcellular location">
    <molecule>Isoform 4</molecule>
    <subcellularLocation>
        <location evidence="9">Endoplasmic reticulum membrane</location>
        <topology evidence="6">Multi-pass membrane protein</topology>
    </subcellularLocation>
    <text evidence="9">Cytoplasmic, and probably remains in the endoplasmic reticulum.</text>
</comment>
<comment type="alternative products">
    <event type="alternative splicing"/>
    <isoform>
        <id>Q9BG98-1</id>
        <name>1</name>
        <sequence type="displayed"/>
    </isoform>
    <isoform>
        <id>Q9BG98-2</id>
        <name>2</name>
        <sequence type="described" ref="VSP_009967"/>
    </isoform>
    <isoform>
        <id>Q9BG98-3</id>
        <name>3</name>
        <name>rbslo1</name>
        <sequence type="described" ref="VSP_009966"/>
    </isoform>
    <isoform>
        <id>Q9BG98-4</id>
        <name>4</name>
        <name>rbslo2</name>
        <sequence type="described" ref="VSP_009968 VSP_009969"/>
    </isoform>
    <text>May be partially controlled by hormonal stress. Additional isoforms seem to exist.</text>
</comment>
<comment type="domain">
    <text evidence="4">The S0 segment is essential for the modulation by the accessory beta subunits KCNMB1, KCNMB2, KCNMB3 and KCNMB4.</text>
</comment>
<comment type="domain">
    <text evidence="4">The S4 segment, which is characterized by a series of positively charged amino acids at every third position, is part of the voltage-sensor.</text>
</comment>
<comment type="domain">
    <text evidence="4">The pore-forming domain (also referred as P region) is imbedded into the membrane, and forms the selectivity filter of the pore. It contains the signature sequence of potassium channels that displays selectivity to potassium (By similarity).</text>
</comment>
<comment type="domain">
    <text evidence="1">The RCK N-terminal domain mediates the homotetramerization, thereby promoting the assembly of monomers into functional potassium channel. It includes binding sites for Ca(2+) and Mg(2+) (By similarity).</text>
</comment>
<comment type="domain">
    <text evidence="4">The heme-binding motif mediates inhibition of channel activation by heme. Carbon monoxide-bound heme leads to increased channel activation (By similarity).</text>
</comment>
<comment type="domain">
    <text evidence="2">The calcium bowl constitutes one of the Ca(2+) sensors and probably acts as a Ca(2+)-binding site. There are however other Ca(2+) sensor regions required for activation of the channel.</text>
</comment>
<comment type="PTM">
    <text evidence="4 13">Phosphorylated (Probable). Phosphorylation by kinases such as PKA and/or PKG. In smooth muscles, phosphorylation affects its activity (By similarity).</text>
</comment>
<comment type="PTM">
    <text evidence="4">Palmitoylation by ZDHHC22 and ZDHHC23 within the intracellular linker between the S0 and S1 transmembrane domains regulates localization to the plasma membrane. Depalmitoylated by LYPLA1 and LYPLAL1, leading to retard exit from the trans-Golgi network (By similarity).</text>
</comment>
<comment type="miscellaneous">
    <text>The protein was initially thought to contain two functionally distinct parts: The core channel (from the N-terminus to the S9 segment) that mediates the channel activity, and the cytoplasmic tail (from the S9 segment to the C-terminus) that mediates the calcium sensing. The situation is however more complex, since the core channel contains binding sites for Ca(2+) and Mg(2+).</text>
</comment>
<comment type="similarity">
    <text evidence="13">Belongs to the potassium channel family. Calcium-activated (TC 1.A.1.3) subfamily. KCa1.1/KCNMA1 sub-subfamily.</text>
</comment>
<comment type="sequence caution" evidence="13">
    <conflict type="erroneous initiation">
        <sequence resource="EMBL-CDS" id="AAF17562"/>
    </conflict>
</comment>
<comment type="sequence caution" evidence="13">
    <conflict type="erroneous initiation">
        <sequence resource="EMBL-CDS" id="BAA23747"/>
    </conflict>
</comment>
<keyword id="KW-0002">3D-structure</keyword>
<keyword id="KW-0025">Alternative splicing</keyword>
<keyword id="KW-0106">Calcium</keyword>
<keyword id="KW-1003">Cell membrane</keyword>
<keyword id="KW-0256">Endoplasmic reticulum</keyword>
<keyword id="KW-0407">Ion channel</keyword>
<keyword id="KW-0406">Ion transport</keyword>
<keyword id="KW-0449">Lipoprotein</keyword>
<keyword id="KW-0460">Magnesium</keyword>
<keyword id="KW-0472">Membrane</keyword>
<keyword id="KW-0479">Metal-binding</keyword>
<keyword id="KW-0564">Palmitate</keyword>
<keyword id="KW-0597">Phosphoprotein</keyword>
<keyword id="KW-0630">Potassium</keyword>
<keyword id="KW-0631">Potassium channel</keyword>
<keyword id="KW-0633">Potassium transport</keyword>
<keyword id="KW-1185">Reference proteome</keyword>
<keyword id="KW-0812">Transmembrane</keyword>
<keyword id="KW-1133">Transmembrane helix</keyword>
<keyword id="KW-0813">Transport</keyword>
<keyword id="KW-0851">Voltage-gated channel</keyword>
<protein>
    <recommendedName>
        <fullName>Calcium-activated potassium channel subunit alpha-1</fullName>
    </recommendedName>
    <alternativeName>
        <fullName>BK channel</fullName>
    </alternativeName>
    <alternativeName>
        <fullName>BKCA alpha</fullName>
    </alternativeName>
    <alternativeName>
        <fullName>Calcium-activated potassium channel, subfamily M subunit alpha-1</fullName>
    </alternativeName>
    <alternativeName>
        <fullName>K(VCA)alpha</fullName>
    </alternativeName>
    <alternativeName>
        <fullName>KCa1.1</fullName>
    </alternativeName>
    <alternativeName>
        <fullName>Maxi K channel</fullName>
        <shortName>MaxiK</shortName>
    </alternativeName>
    <alternativeName>
        <fullName>Slo-alpha</fullName>
    </alternativeName>
    <alternativeName>
        <fullName>Slo1</fullName>
    </alternativeName>
    <alternativeName>
        <fullName>Slowpoke homolog</fullName>
        <shortName>RbSlo</shortName>
        <shortName>Slo homolog</shortName>
    </alternativeName>
</protein>
<dbReference type="EMBL" id="AF321818">
    <property type="protein sequence ID" value="AAK09380.1"/>
    <property type="molecule type" value="mRNA"/>
</dbReference>
<dbReference type="EMBL" id="AF201702">
    <property type="protein sequence ID" value="AAF17562.1"/>
    <property type="status" value="ALT_INIT"/>
    <property type="molecule type" value="mRNA"/>
</dbReference>
<dbReference type="EMBL" id="AB009312">
    <property type="protein sequence ID" value="BAA23747.1"/>
    <property type="status" value="ALT_INIT"/>
    <property type="molecule type" value="mRNA"/>
</dbReference>
<dbReference type="RefSeq" id="NP_001075539.1">
    <property type="nucleotide sequence ID" value="NM_001082070.1"/>
</dbReference>
<dbReference type="PDB" id="8S3E">
    <property type="method" value="EM"/>
    <property type="resolution" value="2.39 A"/>
    <property type="chains" value="A/B/C/D=67-1179"/>
</dbReference>
<dbReference type="PDBsum" id="8S3E"/>
<dbReference type="EMDB" id="EMD-19691"/>
<dbReference type="SMR" id="Q9BG98"/>
<dbReference type="FunCoup" id="Q9BG98">
    <property type="interactions" value="280"/>
</dbReference>
<dbReference type="STRING" id="9986.ENSOCUP00000046986"/>
<dbReference type="PaxDb" id="9986-ENSOCUP00000022693"/>
<dbReference type="GeneID" id="100008745"/>
<dbReference type="KEGG" id="ocu:100008745"/>
<dbReference type="CTD" id="3778"/>
<dbReference type="eggNOG" id="KOG1420">
    <property type="taxonomic scope" value="Eukaryota"/>
</dbReference>
<dbReference type="InParanoid" id="Q9BG98"/>
<dbReference type="OrthoDB" id="10035564at2759"/>
<dbReference type="Proteomes" id="UP000001811">
    <property type="component" value="Unplaced"/>
</dbReference>
<dbReference type="GO" id="GO:0005789">
    <property type="term" value="C:endoplasmic reticulum membrane"/>
    <property type="evidence" value="ECO:0007669"/>
    <property type="project" value="UniProtKB-SubCell"/>
</dbReference>
<dbReference type="GO" id="GO:0034702">
    <property type="term" value="C:monoatomic ion channel complex"/>
    <property type="evidence" value="ECO:0007669"/>
    <property type="project" value="UniProtKB-KW"/>
</dbReference>
<dbReference type="GO" id="GO:0045211">
    <property type="term" value="C:postsynaptic membrane"/>
    <property type="evidence" value="ECO:0007669"/>
    <property type="project" value="TreeGrafter"/>
</dbReference>
<dbReference type="GO" id="GO:0015269">
    <property type="term" value="F:calcium-activated potassium channel activity"/>
    <property type="evidence" value="ECO:0000314"/>
    <property type="project" value="UniProtKB"/>
</dbReference>
<dbReference type="GO" id="GO:0060072">
    <property type="term" value="F:large conductance calcium-activated potassium channel activity"/>
    <property type="evidence" value="ECO:0007669"/>
    <property type="project" value="TreeGrafter"/>
</dbReference>
<dbReference type="GO" id="GO:0046872">
    <property type="term" value="F:metal ion binding"/>
    <property type="evidence" value="ECO:0007669"/>
    <property type="project" value="UniProtKB-KW"/>
</dbReference>
<dbReference type="GO" id="GO:0005249">
    <property type="term" value="F:voltage-gated potassium channel activity"/>
    <property type="evidence" value="ECO:0000314"/>
    <property type="project" value="UniProtKB"/>
</dbReference>
<dbReference type="FunFam" id="3.40.50.720:FF:000098">
    <property type="entry name" value="calcium-activated potassium channel subunit alpha-1 isoform X3"/>
    <property type="match status" value="1"/>
</dbReference>
<dbReference type="FunFam" id="3.40.50.720:FF:000005">
    <property type="entry name" value="calcium-activated potassium channel subunit alpha-1 isoform X6"/>
    <property type="match status" value="1"/>
</dbReference>
<dbReference type="FunFam" id="1.10.287.70:FF:000015">
    <property type="entry name" value="Calcium-activated potassium channel subunit alpha-1 isoform X7"/>
    <property type="match status" value="1"/>
</dbReference>
<dbReference type="Gene3D" id="1.10.287.70">
    <property type="match status" value="1"/>
</dbReference>
<dbReference type="Gene3D" id="3.40.50.720">
    <property type="entry name" value="NAD(P)-binding Rossmann-like Domain"/>
    <property type="match status" value="2"/>
</dbReference>
<dbReference type="InterPro" id="IPR005821">
    <property type="entry name" value="Ion_trans_dom"/>
</dbReference>
<dbReference type="InterPro" id="IPR003929">
    <property type="entry name" value="K_chnl_BK_asu"/>
</dbReference>
<dbReference type="InterPro" id="IPR047871">
    <property type="entry name" value="K_chnl_Slo-like"/>
</dbReference>
<dbReference type="InterPro" id="IPR036291">
    <property type="entry name" value="NAD(P)-bd_dom_sf"/>
</dbReference>
<dbReference type="InterPro" id="IPR003148">
    <property type="entry name" value="RCK_N"/>
</dbReference>
<dbReference type="InterPro" id="IPR048735">
    <property type="entry name" value="Slowpoke-like_C"/>
</dbReference>
<dbReference type="PANTHER" id="PTHR10027">
    <property type="entry name" value="CALCIUM-ACTIVATED POTASSIUM CHANNEL ALPHA CHAIN"/>
    <property type="match status" value="1"/>
</dbReference>
<dbReference type="PANTHER" id="PTHR10027:SF40">
    <property type="entry name" value="CALCIUM-ACTIVATED POTASSIUM CHANNEL SUBUNIT ALPHA-1"/>
    <property type="match status" value="1"/>
</dbReference>
<dbReference type="Pfam" id="PF03493">
    <property type="entry name" value="BK_channel_a"/>
    <property type="match status" value="1"/>
</dbReference>
<dbReference type="Pfam" id="PF00520">
    <property type="entry name" value="Ion_trans"/>
    <property type="match status" value="1"/>
</dbReference>
<dbReference type="Pfam" id="PF22614">
    <property type="entry name" value="Slo-like_RCK"/>
    <property type="match status" value="2"/>
</dbReference>
<dbReference type="Pfam" id="PF21014">
    <property type="entry name" value="Slowpoke_C"/>
    <property type="match status" value="1"/>
</dbReference>
<dbReference type="PRINTS" id="PR01449">
    <property type="entry name" value="BKCHANNELA"/>
</dbReference>
<dbReference type="PRINTS" id="PR00169">
    <property type="entry name" value="KCHANNEL"/>
</dbReference>
<dbReference type="SUPFAM" id="SSF51735">
    <property type="entry name" value="NAD(P)-binding Rossmann-fold domains"/>
    <property type="match status" value="1"/>
</dbReference>
<dbReference type="SUPFAM" id="SSF81324">
    <property type="entry name" value="Voltage-gated potassium channels"/>
    <property type="match status" value="1"/>
</dbReference>
<dbReference type="PROSITE" id="PS51201">
    <property type="entry name" value="RCK_N"/>
    <property type="match status" value="2"/>
</dbReference>
<reference key="1">
    <citation type="submission" date="2000-11" db="EMBL/GenBank/DDBJ databases">
        <authorList>
            <person name="Rae J.L."/>
        </authorList>
    </citation>
    <scope>NUCLEOTIDE SEQUENCE [MRNA] (ISOFORM 1)</scope>
    <source>
        <strain>New Zealand white</strain>
        <tissue>Corneal epithelium</tissue>
    </source>
</reference>
<reference key="2">
    <citation type="journal article" date="1997" name="Am. J. Physiol.">
        <title>Cloning and characterization of maxi K+ channel alpha-subunit in rabbit kidney.</title>
        <authorList>
            <person name="Morita T."/>
            <person name="Hanaoka K."/>
            <person name="Morales M.M."/>
            <person name="Montrose-Rafizadeh C."/>
            <person name="Guggino W.B."/>
        </authorList>
    </citation>
    <scope>NUCLEOTIDE SEQUENCE [MRNA] OF 29-1179 (ISOFORMS 3 AND 4)</scope>
    <scope>FUNCTION (ISOFORM 3)</scope>
    <scope>TRANSPORTER ACTIVITY (ISOFORM 3)</scope>
    <source>
        <tissue>Kidney</tissue>
    </source>
</reference>
<reference key="3">
    <citation type="submission" date="1997-11" db="EMBL/GenBank/DDBJ databases">
        <title>Rabbit calcium-activated potassium channel (Maxi-K) alpha subunit mRNA, complete CDS.</title>
        <authorList>
            <person name="Sakamoto H."/>
            <person name="Ide T."/>
            <person name="Kasai M."/>
        </authorList>
    </citation>
    <scope>NUCLEOTIDE SEQUENCE [MRNA] OF 32-1179 (ISOFORM 2)</scope>
    <source>
        <tissue>Skeletal muscle</tissue>
    </source>
</reference>
<reference key="4">
    <citation type="journal article" date="2003" name="J. Biol. Chem.">
        <title>The cytoplasmic tail of large conductance, voltage- and Ca2+-activated K+ (MaxiK) channel is necessary for its cell surface expression.</title>
        <authorList>
            <person name="Wang S.-X."/>
            <person name="Ikeda M."/>
            <person name="Guggino W.B."/>
        </authorList>
    </citation>
    <scope>ALTERNATIVE SPLICING</scope>
    <scope>SUBCELLULAR LOCATION</scope>
</reference>
<evidence type="ECO:0000250" key="1"/>
<evidence type="ECO:0000250" key="2">
    <source>
        <dbReference type="UniProtKB" id="B7ZC96"/>
    </source>
</evidence>
<evidence type="ECO:0000250" key="3">
    <source>
        <dbReference type="UniProtKB" id="Q08460"/>
    </source>
</evidence>
<evidence type="ECO:0000250" key="4">
    <source>
        <dbReference type="UniProtKB" id="Q12791"/>
    </source>
</evidence>
<evidence type="ECO:0000250" key="5">
    <source>
        <dbReference type="UniProtKB" id="Q28204"/>
    </source>
</evidence>
<evidence type="ECO:0000255" key="6"/>
<evidence type="ECO:0000255" key="7">
    <source>
        <dbReference type="PROSITE-ProRule" id="PRU00543"/>
    </source>
</evidence>
<evidence type="ECO:0000256" key="8">
    <source>
        <dbReference type="SAM" id="MobiDB-lite"/>
    </source>
</evidence>
<evidence type="ECO:0000269" key="9">
    <source>
    </source>
</evidence>
<evidence type="ECO:0000269" key="10">
    <source>
    </source>
</evidence>
<evidence type="ECO:0000303" key="11">
    <source>
    </source>
</evidence>
<evidence type="ECO:0000303" key="12">
    <source ref="3"/>
</evidence>
<evidence type="ECO:0000305" key="13"/>
<evidence type="ECO:0007829" key="14">
    <source>
        <dbReference type="PDB" id="8S3E"/>
    </source>
</evidence>
<name>KCMA1_RABIT</name>
<accession>Q9BG98</accession>
<accession>O46371</accession>
<accession>Q9TT88</accession>
<organism>
    <name type="scientific">Oryctolagus cuniculus</name>
    <name type="common">Rabbit</name>
    <dbReference type="NCBI Taxonomy" id="9986"/>
    <lineage>
        <taxon>Eukaryota</taxon>
        <taxon>Metazoa</taxon>
        <taxon>Chordata</taxon>
        <taxon>Craniata</taxon>
        <taxon>Vertebrata</taxon>
        <taxon>Euteleostomi</taxon>
        <taxon>Mammalia</taxon>
        <taxon>Eutheria</taxon>
        <taxon>Euarchontoglires</taxon>
        <taxon>Glires</taxon>
        <taxon>Lagomorpha</taxon>
        <taxon>Leporidae</taxon>
        <taxon>Oryctolagus</taxon>
    </lineage>
</organism>
<gene>
    <name type="primary">KCNMA1</name>
    <name type="synonym">KCNMA</name>
</gene>
<proteinExistence type="evidence at protein level"/>